<name>ERAL1_CAEEL</name>
<feature type="chain" id="PRO_0000122488" description="GTPase Era, mitochondrial">
    <location>
        <begin position="1"/>
        <end position="394"/>
    </location>
</feature>
<feature type="domain" description="Era-type G" evidence="3">
    <location>
        <begin position="32"/>
        <end position="280"/>
    </location>
</feature>
<feature type="region of interest" description="G1" evidence="3">
    <location>
        <begin position="40"/>
        <end position="47"/>
    </location>
</feature>
<feature type="region of interest" description="G2" evidence="3">
    <location>
        <begin position="66"/>
        <end position="70"/>
    </location>
</feature>
<feature type="region of interest" description="G3" evidence="3">
    <location>
        <begin position="87"/>
        <end position="90"/>
    </location>
</feature>
<feature type="region of interest" description="G4" evidence="3">
    <location>
        <begin position="160"/>
        <end position="163"/>
    </location>
</feature>
<feature type="region of interest" description="G5" evidence="3">
    <location>
        <begin position="259"/>
        <end position="261"/>
    </location>
</feature>
<feature type="binding site" evidence="2">
    <location>
        <begin position="40"/>
        <end position="47"/>
    </location>
    <ligand>
        <name>GTP</name>
        <dbReference type="ChEBI" id="CHEBI:37565"/>
    </ligand>
</feature>
<feature type="binding site" evidence="2">
    <location>
        <begin position="87"/>
        <end position="91"/>
    </location>
    <ligand>
        <name>GTP</name>
        <dbReference type="ChEBI" id="CHEBI:37565"/>
    </ligand>
</feature>
<feature type="binding site" evidence="2">
    <location>
        <begin position="160"/>
        <end position="163"/>
    </location>
    <ligand>
        <name>GTP</name>
        <dbReference type="ChEBI" id="CHEBI:37565"/>
    </ligand>
</feature>
<gene>
    <name evidence="6" type="primary">eral-1</name>
    <name evidence="6" type="ORF">E02H1.2</name>
</gene>
<comment type="function">
    <text evidence="1 4">Probable GTPase that plays a role in the mitochondrial ribosomal small subunit assembly (By similarity). Specifically binds the 12S mitochondrial rRNA (12S mt-rRNA) to a 33 nucleotide section delineating the 3' terminal stem-loop region (By similarity). May act as a chaperone that protects the 12S mt-rRNA on the 28S mitoribosomal subunit during ribosomal small subunit assembly (By similarity). May play a role in positively regulating mitochondrial function (PubMed:28449065). Plays a role in fertility (PubMed:28449065).</text>
</comment>
<comment type="subcellular location">
    <subcellularLocation>
        <location evidence="1">Mitochondrion matrix</location>
    </subcellularLocation>
    <subcellularLocation>
        <location evidence="1">Mitochondrion inner membrane</location>
        <topology evidence="5">Peripheral membrane protein</topology>
    </subcellularLocation>
    <text evidence="1">Localizes on the matrix side on the mitochondrial inner membrane.</text>
</comment>
<comment type="disruption phenotype">
    <text evidence="4">RNAi-mediated knockdown abolishes fertilized egg production and there is no egg laying, but animals do produce oocytes (PubMed:28449065). RNAi-mediated knockdown causes a 25% decrease in the rate of oxygen consumption suggesting decreased mitochondrial respiration (PubMed:28449065).</text>
</comment>
<comment type="similarity">
    <text evidence="3 5">Belongs to the TRAFAC class TrmE-Era-EngA-EngB-Septin-like GTPase superfamily. Era GTPase family.</text>
</comment>
<reference key="1">
    <citation type="journal article" date="1998" name="Science">
        <title>Genome sequence of the nematode C. elegans: a platform for investigating biology.</title>
        <authorList>
            <consortium name="The C. elegans sequencing consortium"/>
        </authorList>
    </citation>
    <scope>NUCLEOTIDE SEQUENCE [LARGE SCALE GENOMIC DNA]</scope>
    <source>
        <strain>Bristol N2</strain>
    </source>
</reference>
<reference key="2">
    <citation type="journal article" date="2017" name="Hum. Mol. Genet.">
        <title>A homozygous missense mutation in ERAL1, encoding a mitochondrial rRNA chaperone, causes Perrault syndrome.</title>
        <authorList>
            <person name="Chatzispyrou I.A."/>
            <person name="Alders M."/>
            <person name="Guerrero-Castillo S."/>
            <person name="Zapata Perez R."/>
            <person name="Haagmans M.A."/>
            <person name="Mouchiroud L."/>
            <person name="Koster J."/>
            <person name="Ofman R."/>
            <person name="Baas F."/>
            <person name="Waterham H.R."/>
            <person name="Spelbrink J.N."/>
            <person name="Auwerx J."/>
            <person name="Mannens M.M."/>
            <person name="Houtkooper R.H."/>
            <person name="Plomp A.S."/>
        </authorList>
    </citation>
    <scope>FUNCTION</scope>
    <scope>DISRUPTION PHENOTYPE</scope>
</reference>
<dbReference type="EMBL" id="BX284602">
    <property type="protein sequence ID" value="CAA87384.1"/>
    <property type="molecule type" value="Genomic_DNA"/>
</dbReference>
<dbReference type="EMBL" id="Z36752">
    <property type="protein sequence ID" value="CAA87384.1"/>
    <property type="status" value="JOINED"/>
    <property type="molecule type" value="Genomic_DNA"/>
</dbReference>
<dbReference type="PIR" id="T20419">
    <property type="entry name" value="T20419"/>
</dbReference>
<dbReference type="RefSeq" id="NP_496060.1">
    <property type="nucleotide sequence ID" value="NM_063659.2"/>
</dbReference>
<dbReference type="SMR" id="Q09523"/>
<dbReference type="FunCoup" id="Q09523">
    <property type="interactions" value="2680"/>
</dbReference>
<dbReference type="STRING" id="6239.E02H1.2.1"/>
<dbReference type="PaxDb" id="6239-E02H1.2"/>
<dbReference type="PeptideAtlas" id="Q09523"/>
<dbReference type="EnsemblMetazoa" id="E02H1.2.1">
    <property type="protein sequence ID" value="E02H1.2.1"/>
    <property type="gene ID" value="WBGene00008456"/>
</dbReference>
<dbReference type="GeneID" id="174508"/>
<dbReference type="KEGG" id="cel:CELE_E02H1.2"/>
<dbReference type="UCSC" id="E02H1.2">
    <property type="organism name" value="c. elegans"/>
</dbReference>
<dbReference type="AGR" id="WB:WBGene00008456"/>
<dbReference type="CTD" id="174508"/>
<dbReference type="WormBase" id="E02H1.2">
    <property type="protein sequence ID" value="CE01537"/>
    <property type="gene ID" value="WBGene00008456"/>
    <property type="gene designation" value="eral-1"/>
</dbReference>
<dbReference type="eggNOG" id="KOG1423">
    <property type="taxonomic scope" value="Eukaryota"/>
</dbReference>
<dbReference type="GeneTree" id="ENSGT00390000013800"/>
<dbReference type="HOGENOM" id="CLU_038009_2_1_1"/>
<dbReference type="InParanoid" id="Q09523"/>
<dbReference type="OMA" id="WAEVDVI"/>
<dbReference type="OrthoDB" id="8954335at2759"/>
<dbReference type="PhylomeDB" id="Q09523"/>
<dbReference type="Reactome" id="R-CEL-5389840">
    <property type="pathway name" value="Mitochondrial translation elongation"/>
</dbReference>
<dbReference type="Reactome" id="R-CEL-5419276">
    <property type="pathway name" value="Mitochondrial translation termination"/>
</dbReference>
<dbReference type="PRO" id="PR:Q09523"/>
<dbReference type="Proteomes" id="UP000001940">
    <property type="component" value="Chromosome II"/>
</dbReference>
<dbReference type="Bgee" id="WBGene00008456">
    <property type="expression patterns" value="Expressed in germ line (C elegans) and 4 other cell types or tissues"/>
</dbReference>
<dbReference type="GO" id="GO:0005743">
    <property type="term" value="C:mitochondrial inner membrane"/>
    <property type="evidence" value="ECO:0007669"/>
    <property type="project" value="UniProtKB-SubCell"/>
</dbReference>
<dbReference type="GO" id="GO:0005759">
    <property type="term" value="C:mitochondrial matrix"/>
    <property type="evidence" value="ECO:0000318"/>
    <property type="project" value="GO_Central"/>
</dbReference>
<dbReference type="GO" id="GO:0005525">
    <property type="term" value="F:GTP binding"/>
    <property type="evidence" value="ECO:0007669"/>
    <property type="project" value="UniProtKB-KW"/>
</dbReference>
<dbReference type="GO" id="GO:0043024">
    <property type="term" value="F:ribosomal small subunit binding"/>
    <property type="evidence" value="ECO:0000318"/>
    <property type="project" value="GO_Central"/>
</dbReference>
<dbReference type="GO" id="GO:0019843">
    <property type="term" value="F:rRNA binding"/>
    <property type="evidence" value="ECO:0000318"/>
    <property type="project" value="GO_Central"/>
</dbReference>
<dbReference type="GO" id="GO:1901046">
    <property type="term" value="P:positive regulation of egg-laying behavior"/>
    <property type="evidence" value="ECO:0000315"/>
    <property type="project" value="UniProtKB"/>
</dbReference>
<dbReference type="GO" id="GO:1903715">
    <property type="term" value="P:regulation of aerobic respiration"/>
    <property type="evidence" value="ECO:0000315"/>
    <property type="project" value="UniProtKB"/>
</dbReference>
<dbReference type="GO" id="GO:0000028">
    <property type="term" value="P:ribosomal small subunit assembly"/>
    <property type="evidence" value="ECO:0000318"/>
    <property type="project" value="GO_Central"/>
</dbReference>
<dbReference type="CDD" id="cd04163">
    <property type="entry name" value="Era"/>
    <property type="match status" value="1"/>
</dbReference>
<dbReference type="CDD" id="cd22534">
    <property type="entry name" value="KH-II_Era"/>
    <property type="match status" value="1"/>
</dbReference>
<dbReference type="Gene3D" id="3.30.300.20">
    <property type="match status" value="1"/>
</dbReference>
<dbReference type="Gene3D" id="3.40.50.300">
    <property type="entry name" value="P-loop containing nucleotide triphosphate hydrolases"/>
    <property type="match status" value="1"/>
</dbReference>
<dbReference type="InterPro" id="IPR030388">
    <property type="entry name" value="G_ERA_dom"/>
</dbReference>
<dbReference type="InterPro" id="IPR006073">
    <property type="entry name" value="GTP-bd"/>
</dbReference>
<dbReference type="InterPro" id="IPR005662">
    <property type="entry name" value="GTPase_Era-like"/>
</dbReference>
<dbReference type="InterPro" id="IPR015946">
    <property type="entry name" value="KH_dom-like_a/b"/>
</dbReference>
<dbReference type="InterPro" id="IPR009019">
    <property type="entry name" value="KH_sf_prok-type"/>
</dbReference>
<dbReference type="InterPro" id="IPR027417">
    <property type="entry name" value="P-loop_NTPase"/>
</dbReference>
<dbReference type="InterPro" id="IPR005225">
    <property type="entry name" value="Small_GTP-bd"/>
</dbReference>
<dbReference type="NCBIfam" id="TIGR00231">
    <property type="entry name" value="small_GTP"/>
    <property type="match status" value="1"/>
</dbReference>
<dbReference type="PANTHER" id="PTHR42698">
    <property type="entry name" value="GTPASE ERA"/>
    <property type="match status" value="1"/>
</dbReference>
<dbReference type="PANTHER" id="PTHR42698:SF1">
    <property type="entry name" value="GTPASE ERA, MITOCHONDRIAL"/>
    <property type="match status" value="1"/>
</dbReference>
<dbReference type="Pfam" id="PF01926">
    <property type="entry name" value="MMR_HSR1"/>
    <property type="match status" value="1"/>
</dbReference>
<dbReference type="SUPFAM" id="SSF52540">
    <property type="entry name" value="P-loop containing nucleoside triphosphate hydrolases"/>
    <property type="match status" value="1"/>
</dbReference>
<dbReference type="SUPFAM" id="SSF54814">
    <property type="entry name" value="Prokaryotic type KH domain (KH-domain type II)"/>
    <property type="match status" value="1"/>
</dbReference>
<dbReference type="PROSITE" id="PS51713">
    <property type="entry name" value="G_ERA"/>
    <property type="match status" value="1"/>
</dbReference>
<organism>
    <name type="scientific">Caenorhabditis elegans</name>
    <dbReference type="NCBI Taxonomy" id="6239"/>
    <lineage>
        <taxon>Eukaryota</taxon>
        <taxon>Metazoa</taxon>
        <taxon>Ecdysozoa</taxon>
        <taxon>Nematoda</taxon>
        <taxon>Chromadorea</taxon>
        <taxon>Rhabditida</taxon>
        <taxon>Rhabditina</taxon>
        <taxon>Rhabditomorpha</taxon>
        <taxon>Rhabditoidea</taxon>
        <taxon>Rhabditidae</taxon>
        <taxon>Peloderinae</taxon>
        <taxon>Caenorhabditis</taxon>
    </lineage>
</organism>
<evidence type="ECO:0000250" key="1">
    <source>
        <dbReference type="UniProtKB" id="O75616"/>
    </source>
</evidence>
<evidence type="ECO:0000250" key="2">
    <source>
        <dbReference type="UniProtKB" id="P06616"/>
    </source>
</evidence>
<evidence type="ECO:0000255" key="3">
    <source>
        <dbReference type="PROSITE-ProRule" id="PRU01050"/>
    </source>
</evidence>
<evidence type="ECO:0000269" key="4">
    <source>
    </source>
</evidence>
<evidence type="ECO:0000305" key="5"/>
<evidence type="ECO:0000312" key="6">
    <source>
        <dbReference type="WormBase" id="E02H1.2"/>
    </source>
</evidence>
<keyword id="KW-0342">GTP-binding</keyword>
<keyword id="KW-0472">Membrane</keyword>
<keyword id="KW-0496">Mitochondrion</keyword>
<keyword id="KW-0999">Mitochondrion inner membrane</keyword>
<keyword id="KW-0547">Nucleotide-binding</keyword>
<keyword id="KW-1185">Reference proteome</keyword>
<accession>Q09523</accession>
<proteinExistence type="inferred from homology"/>
<protein>
    <recommendedName>
        <fullName evidence="1">GTPase Era, mitochondrial</fullName>
    </recommendedName>
    <alternativeName>
        <fullName evidence="1">ERA-like protein 1</fullName>
    </alternativeName>
</protein>
<sequence>MIIKRLNFSCRLFSTASTSTSYEKTPIQPATKCLQLAVIGAPNVGKSLLTNSLIRCPLSAVSSKMDTTTRNISASICSDSTQLVFVDSPGAVSTSHVRQTMKKTSATSGDRVLQDPERALQRAQHVLVVQDSTAPGAYIHHRVLHMLHRYSHVPSILVMNKIDLVMRRSDLLPLVEILTNGQLSDNQQISTKPAQIGRLGKSLSTNIQSSSSFKPSDEKWQSQFRELIQKPTWKCSYSETRSLFRTICGWSGFERVFFVSSLNGEGIDELRDHLMSISPQGEWKMQDGMPTGESAQQLCIDSIRAAVLDTTPSDVAYTVQIRISEWEEQGEVLQIVGEIRCQKPRDGSLIIGKGGKRISEIGRRVNEHLHSLFQRQLYARLIVTHNGKLITQSK</sequence>